<dbReference type="EMBL" id="AE000783">
    <property type="protein sequence ID" value="AAC66994.1"/>
    <property type="molecule type" value="Genomic_DNA"/>
</dbReference>
<dbReference type="PIR" id="B70181">
    <property type="entry name" value="B70181"/>
</dbReference>
<dbReference type="RefSeq" id="NP_212785.1">
    <property type="nucleotide sequence ID" value="NC_001318.1"/>
</dbReference>
<dbReference type="RefSeq" id="WP_002657363.1">
    <property type="nucleotide sequence ID" value="NC_001318.1"/>
</dbReference>
<dbReference type="SMR" id="O51595"/>
<dbReference type="STRING" id="224326.BB_0651"/>
<dbReference type="PaxDb" id="224326-BB_0651"/>
<dbReference type="EnsemblBacteria" id="AAC66994">
    <property type="protein sequence ID" value="AAC66994"/>
    <property type="gene ID" value="BB_0651"/>
</dbReference>
<dbReference type="GeneID" id="56567461"/>
<dbReference type="KEGG" id="bbu:BB_0651"/>
<dbReference type="PATRIC" id="fig|224326.49.peg.1042"/>
<dbReference type="HOGENOM" id="CLU_116157_5_2_12"/>
<dbReference type="OrthoDB" id="9800132at2"/>
<dbReference type="Proteomes" id="UP000001807">
    <property type="component" value="Chromosome"/>
</dbReference>
<dbReference type="GO" id="GO:0005886">
    <property type="term" value="C:plasma membrane"/>
    <property type="evidence" value="ECO:0007669"/>
    <property type="project" value="UniProtKB-SubCell"/>
</dbReference>
<dbReference type="GO" id="GO:0015031">
    <property type="term" value="P:protein transport"/>
    <property type="evidence" value="ECO:0007669"/>
    <property type="project" value="UniProtKB-KW"/>
</dbReference>
<dbReference type="InterPro" id="IPR003849">
    <property type="entry name" value="Preprotein_translocase_YajC"/>
</dbReference>
<dbReference type="NCBIfam" id="TIGR00739">
    <property type="entry name" value="yajC"/>
    <property type="match status" value="1"/>
</dbReference>
<dbReference type="PANTHER" id="PTHR33909">
    <property type="entry name" value="SEC TRANSLOCON ACCESSORY COMPLEX SUBUNIT YAJC"/>
    <property type="match status" value="1"/>
</dbReference>
<dbReference type="PANTHER" id="PTHR33909:SF1">
    <property type="entry name" value="SEC TRANSLOCON ACCESSORY COMPLEX SUBUNIT YAJC"/>
    <property type="match status" value="1"/>
</dbReference>
<dbReference type="Pfam" id="PF02699">
    <property type="entry name" value="YajC"/>
    <property type="match status" value="1"/>
</dbReference>
<dbReference type="PRINTS" id="PR01853">
    <property type="entry name" value="YAJCTRNLCASE"/>
</dbReference>
<dbReference type="SMART" id="SM01323">
    <property type="entry name" value="YajC"/>
    <property type="match status" value="1"/>
</dbReference>
<name>YAJC_BORBU</name>
<accession>O51595</accession>
<sequence length="105" mass="11840">MYSMGGFVFLLQEFSGNSSFLRSLLVFVPVIAIFWFLVISPQRKEEKNKKEMIKNLKKGDKVLTIGGIFGVVKKLGDTDVILELSPNNEAVFIKNSIDKVLSEKK</sequence>
<gene>
    <name type="primary">yajC</name>
    <name type="ordered locus">BB_0651</name>
</gene>
<keyword id="KW-0997">Cell inner membrane</keyword>
<keyword id="KW-1003">Cell membrane</keyword>
<keyword id="KW-0472">Membrane</keyword>
<keyword id="KW-0653">Protein transport</keyword>
<keyword id="KW-1185">Reference proteome</keyword>
<keyword id="KW-0811">Translocation</keyword>
<keyword id="KW-0812">Transmembrane</keyword>
<keyword id="KW-1133">Transmembrane helix</keyword>
<keyword id="KW-0813">Transport</keyword>
<organism>
    <name type="scientific">Borreliella burgdorferi (strain ATCC 35210 / DSM 4680 / CIP 102532 / B31)</name>
    <name type="common">Borrelia burgdorferi</name>
    <dbReference type="NCBI Taxonomy" id="224326"/>
    <lineage>
        <taxon>Bacteria</taxon>
        <taxon>Pseudomonadati</taxon>
        <taxon>Spirochaetota</taxon>
        <taxon>Spirochaetia</taxon>
        <taxon>Spirochaetales</taxon>
        <taxon>Borreliaceae</taxon>
        <taxon>Borreliella</taxon>
    </lineage>
</organism>
<protein>
    <recommendedName>
        <fullName>Sec translocon accessory complex subunit YajC</fullName>
    </recommendedName>
</protein>
<evidence type="ECO:0000250" key="1">
    <source>
        <dbReference type="UniProtKB" id="P0ADZ7"/>
    </source>
</evidence>
<evidence type="ECO:0000255" key="2"/>
<evidence type="ECO:0000305" key="3"/>
<reference key="1">
    <citation type="journal article" date="1997" name="Nature">
        <title>Genomic sequence of a Lyme disease spirochaete, Borrelia burgdorferi.</title>
        <authorList>
            <person name="Fraser C.M."/>
            <person name="Casjens S."/>
            <person name="Huang W.M."/>
            <person name="Sutton G.G."/>
            <person name="Clayton R.A."/>
            <person name="Lathigra R."/>
            <person name="White O."/>
            <person name="Ketchum K.A."/>
            <person name="Dodson R.J."/>
            <person name="Hickey E.K."/>
            <person name="Gwinn M.L."/>
            <person name="Dougherty B.A."/>
            <person name="Tomb J.-F."/>
            <person name="Fleischmann R.D."/>
            <person name="Richardson D.L."/>
            <person name="Peterson J.D."/>
            <person name="Kerlavage A.R."/>
            <person name="Quackenbush J."/>
            <person name="Salzberg S.L."/>
            <person name="Hanson M."/>
            <person name="van Vugt R."/>
            <person name="Palmer N."/>
            <person name="Adams M.D."/>
            <person name="Gocayne J.D."/>
            <person name="Weidman J.F."/>
            <person name="Utterback T.R."/>
            <person name="Watthey L."/>
            <person name="McDonald L.A."/>
            <person name="Artiach P."/>
            <person name="Bowman C."/>
            <person name="Garland S.A."/>
            <person name="Fujii C."/>
            <person name="Cotton M.D."/>
            <person name="Horst K."/>
            <person name="Roberts K.M."/>
            <person name="Hatch B."/>
            <person name="Smith H.O."/>
            <person name="Venter J.C."/>
        </authorList>
    </citation>
    <scope>NUCLEOTIDE SEQUENCE [LARGE SCALE GENOMIC DNA]</scope>
    <source>
        <strain>ATCC 35210 / DSM 4680 / CIP 102532 / B31</strain>
    </source>
</reference>
<comment type="function">
    <text evidence="1">The SecYEG-SecDF-YajC-YidC holo-translocon (HTL) protein secretase/insertase is a supercomplex required for protein secretion, insertion of proteins into membranes, and assembly of membrane protein complexes. While the SecYEG complex is essential for assembly of a number of proteins and complexes, the SecDF-YajC-YidC subcomplex facilitates these functions.</text>
</comment>
<comment type="subunit">
    <text evidence="1">Part of the SecDF-YidC-YajC translocase complex. The SecDF-YidC-YajC translocase forms a supercomplex with SecYEG, called the holo-translocon (HTL).</text>
</comment>
<comment type="subcellular location">
    <subcellularLocation>
        <location evidence="1">Cell inner membrane</location>
        <topology evidence="1">Single-pass membrane protein</topology>
    </subcellularLocation>
</comment>
<comment type="similarity">
    <text evidence="3">Belongs to the YajC family.</text>
</comment>
<feature type="chain" id="PRO_0000097021" description="Sec translocon accessory complex subunit YajC">
    <location>
        <begin position="1"/>
        <end position="105"/>
    </location>
</feature>
<feature type="transmembrane region" description="Helical" evidence="2">
    <location>
        <begin position="19"/>
        <end position="39"/>
    </location>
</feature>
<proteinExistence type="inferred from homology"/>